<comment type="function">
    <text evidence="1">Cleaves viral precursor proteins (pTP, pIIIa, pVI, pVII, pVIII, and pX) inside newly assembled particles giving rise to mature virions. Protease complexed to its cofactor slides along the viral DNA to specifically locate and cleave the viral precursors. Mature virions have a weakened organization compared to the unmature virions, thereby facilitating subsequent uncoating. Without maturation, the particle lacks infectivity and is unable to uncoat. Late in adenovirus infection, in the cytoplasm, may participate in the cytoskeleton destruction. Cleaves host cell cytoskeletal keratins K7 and K18.</text>
</comment>
<comment type="catalytic activity">
    <reaction evidence="1">
        <text>Cleaves proteins of the adenovirus and its host cell at two consensus sites: -Yaa-Xaa-Gly-Gly-|-Xaa- and -Yaa-Xaa-Gly-Xaa-|-Gly- (in which Yaa is Met, Ile or Leu, and Xaa is any amino acid).</text>
        <dbReference type="EC" id="3.4.22.39"/>
    </reaction>
</comment>
<comment type="activity regulation">
    <text evidence="1">Requires DNA and protease cofactor for maximal activation. Inside nascent virions, becomes partially activated by binding to the viral DNA, allowing it to cleave the cofactor that binds to the protease and fully activates it. Actin, like the viral protease cofactor, seems to act as a cofactor in the cleavage of cytokeratin 18 and of actin itself.</text>
</comment>
<comment type="subunit">
    <text evidence="1">Interacts with protease cofactor pVI-C; this interaction is necessary for protease activation.</text>
</comment>
<comment type="subcellular location">
    <subcellularLocation>
        <location evidence="1">Virion</location>
    </subcellularLocation>
    <subcellularLocation>
        <location evidence="1">Host nucleus</location>
    </subcellularLocation>
    <text evidence="1">Present in about 10 copies per virion.</text>
</comment>
<comment type="induction">
    <text evidence="1">Expressed in the late phase of the viral replicative cycle.</text>
</comment>
<comment type="miscellaneous">
    <text evidence="1">All late proteins expressed from the major late promoter are produced by alternative splicing and alternative polyadenylation of the same gene giving rise to non-overlapping ORFs. A leader sequence is present in the N-terminus of all these mRNAs and is recognized by the viral shutoff protein to provide expression although conventional translation via ribosome scanning from the cap has been shut off in the host cell.</text>
</comment>
<comment type="similarity">
    <text evidence="1">Belongs to the peptidase C5 family.</text>
</comment>
<protein>
    <recommendedName>
        <fullName evidence="1">Protease</fullName>
        <ecNumber evidence="1">3.4.22.39</ecNumber>
    </recommendedName>
    <alternativeName>
        <fullName evidence="1">Adenain</fullName>
    </alternativeName>
    <alternativeName>
        <fullName evidence="1">Adenovirus protease</fullName>
        <shortName evidence="1">AVP</shortName>
    </alternativeName>
    <alternativeName>
        <fullName evidence="1">Adenovirus proteinase</fullName>
    </alternativeName>
    <alternativeName>
        <fullName evidence="1">Endoprotease</fullName>
    </alternativeName>
</protein>
<keyword id="KW-0068">Autocatalytic cleavage</keyword>
<keyword id="KW-1015">Disulfide bond</keyword>
<keyword id="KW-0238">DNA-binding</keyword>
<keyword id="KW-1048">Host nucleus</keyword>
<keyword id="KW-0378">Hydrolase</keyword>
<keyword id="KW-0426">Late protein</keyword>
<keyword id="KW-0645">Protease</keyword>
<keyword id="KW-1185">Reference proteome</keyword>
<keyword id="KW-0788">Thiol protease</keyword>
<keyword id="KW-0946">Virion</keyword>
<name>PRO_ADEP3</name>
<reference key="1">
    <citation type="journal article" date="1996" name="DNA Seq.">
        <title>Nucleotide and amino acid sequence analysis of the porcine adenovirus 23K protein.</title>
        <authorList>
            <person name="McCoy R.J."/>
            <person name="Johnson M.A."/>
            <person name="Sheppard M."/>
        </authorList>
    </citation>
    <scope>NUCLEOTIDE SEQUENCE [GENOMIC DNA]</scope>
</reference>
<reference key="2">
    <citation type="journal article" date="1998" name="Virus Res.">
        <title>Sequence and transcription map analysis of early region-1 of porcine adenovirus type-3.</title>
        <authorList>
            <person name="Reddy P.S."/>
            <person name="Idamakanti N."/>
            <person name="Song J.Y."/>
            <person name="Lee J.B."/>
            <person name="Hyun B.H."/>
            <person name="Park J.H."/>
            <person name="Cha S.H."/>
            <person name="Tikoo S.K."/>
            <person name="Babiuk L.A."/>
        </authorList>
    </citation>
    <scope>NUCLEOTIDE SEQUENCE [GENOMIC DNA]</scope>
    <source>
        <strain>6618</strain>
    </source>
</reference>
<reference key="3">
    <citation type="journal article" date="1998" name="Virology">
        <title>Nucleotide sequence and transcription map of porcine adenovirus type 3.</title>
        <authorList>
            <person name="Reddy P.S."/>
            <person name="Idamakanti N."/>
            <person name="Song J.Y."/>
            <person name="Lee J.B."/>
            <person name="Hyun B.H."/>
            <person name="Park J.H."/>
            <person name="Cha S.H."/>
            <person name="Bae Y.T."/>
            <person name="Tikoo S.K."/>
            <person name="Babiuk L.A."/>
        </authorList>
    </citation>
    <scope>NUCLEOTIDE SEQUENCE [GENOMIC DNA]</scope>
    <source>
        <strain>6618</strain>
    </source>
</reference>
<reference key="4">
    <citation type="submission" date="1999-02" db="EMBL/GenBank/DDBJ databases">
        <title>Porcine adenovirus serotype 3, complete genome.</title>
        <authorList>
            <person name="Larocque D."/>
            <person name="Malenfant F."/>
            <person name="Massie B."/>
            <person name="Dea S."/>
        </authorList>
    </citation>
    <scope>NUCLEOTIDE SEQUENCE [LARGE SCALE GENOMIC DNA]</scope>
    <source>
        <strain>6618 / IAF</strain>
    </source>
</reference>
<sequence>MGSTEDELRAMARDLQLPRFLGTFDKSFPGFLQESQRCCAIVNTAARHTGGRHWLAVAWEPASRTFYFFDPFGFSDRELAQVYDFEYQRLLRKSAIQSTPDRCLTLVKSTQSVQGPHSAACGLFCLLFLAAFARYPDSPMAYNPVMDLVEGVDNERLFDADVQPIFRANQEACYAFLARHSAYFRAHRHAIMEQTHLHKALDMQ</sequence>
<accession>Q84177</accession>
<gene>
    <name evidence="1" type="primary">L3</name>
</gene>
<evidence type="ECO:0000255" key="1">
    <source>
        <dbReference type="HAMAP-Rule" id="MF_04059"/>
    </source>
</evidence>
<organism>
    <name type="scientific">Porcine adenovirus A serotype 3</name>
    <name type="common">PAdV-3</name>
    <name type="synonym">Porcine adenovirus 3</name>
    <dbReference type="NCBI Taxonomy" id="35265"/>
    <lineage>
        <taxon>Viruses</taxon>
        <taxon>Varidnaviria</taxon>
        <taxon>Bamfordvirae</taxon>
        <taxon>Preplasmiviricota</taxon>
        <taxon>Tectiliviricetes</taxon>
        <taxon>Rowavirales</taxon>
        <taxon>Adenoviridae</taxon>
        <taxon>Mastadenovirus</taxon>
        <taxon>Mastadenovirus porcustertium</taxon>
    </lineage>
</organism>
<feature type="chain" id="PRO_0000218047" description="Protease">
    <location>
        <begin position="1"/>
        <end position="204"/>
    </location>
</feature>
<feature type="active site" evidence="1">
    <location>
        <position position="53"/>
    </location>
</feature>
<feature type="active site" evidence="1">
    <location>
        <position position="70"/>
    </location>
</feature>
<feature type="active site" evidence="1">
    <location>
        <position position="121"/>
    </location>
</feature>
<feature type="site" description="Cleavage; by autolysis" evidence="1">
    <location>
        <begin position="50"/>
        <end position="51"/>
    </location>
</feature>
<feature type="disulfide bond" description="Interchain (with C-10 in cleaved protease cofactor pVI-C)" evidence="1">
    <location>
        <position position="103"/>
    </location>
</feature>
<dbReference type="EC" id="3.4.22.39" evidence="1"/>
<dbReference type="EMBL" id="U33016">
    <property type="protein sequence ID" value="AAB40992.1"/>
    <property type="molecule type" value="Genomic_DNA"/>
</dbReference>
<dbReference type="EMBL" id="AF083132">
    <property type="protein sequence ID" value="AAC99442.1"/>
    <property type="molecule type" value="Genomic_DNA"/>
</dbReference>
<dbReference type="EMBL" id="AJ237815">
    <property type="protein sequence ID" value="CAB41031.1"/>
    <property type="molecule type" value="Genomic_DNA"/>
</dbReference>
<dbReference type="EMBL" id="AB026117">
    <property type="protein sequence ID" value="BAA76969.1"/>
    <property type="molecule type" value="Genomic_DNA"/>
</dbReference>
<dbReference type="RefSeq" id="YP_009211.1">
    <property type="nucleotide sequence ID" value="AC_000189.1"/>
</dbReference>
<dbReference type="SMR" id="Q84177"/>
<dbReference type="MEROPS" id="C05.001"/>
<dbReference type="OrthoDB" id="9248at10239"/>
<dbReference type="Proteomes" id="UP000101284">
    <property type="component" value="Genome"/>
</dbReference>
<dbReference type="Proteomes" id="UP000130591">
    <property type="component" value="Genome"/>
</dbReference>
<dbReference type="Proteomes" id="UP000148028">
    <property type="component" value="Genome"/>
</dbReference>
<dbReference type="GO" id="GO:0042025">
    <property type="term" value="C:host cell nucleus"/>
    <property type="evidence" value="ECO:0007669"/>
    <property type="project" value="UniProtKB-SubCell"/>
</dbReference>
<dbReference type="GO" id="GO:0044423">
    <property type="term" value="C:virion component"/>
    <property type="evidence" value="ECO:0007669"/>
    <property type="project" value="UniProtKB-UniRule"/>
</dbReference>
<dbReference type="GO" id="GO:0004197">
    <property type="term" value="F:cysteine-type endopeptidase activity"/>
    <property type="evidence" value="ECO:0007669"/>
    <property type="project" value="UniProtKB-UniRule"/>
</dbReference>
<dbReference type="GO" id="GO:0003677">
    <property type="term" value="F:DNA binding"/>
    <property type="evidence" value="ECO:0007669"/>
    <property type="project" value="UniProtKB-UniRule"/>
</dbReference>
<dbReference type="GO" id="GO:0006508">
    <property type="term" value="P:proteolysis"/>
    <property type="evidence" value="ECO:0007669"/>
    <property type="project" value="UniProtKB-KW"/>
</dbReference>
<dbReference type="Gene3D" id="3.40.395.10">
    <property type="entry name" value="Adenoviral Proteinase, Chain A"/>
    <property type="match status" value="1"/>
</dbReference>
<dbReference type="HAMAP" id="MF_04059">
    <property type="entry name" value="ADV_PRO"/>
    <property type="match status" value="1"/>
</dbReference>
<dbReference type="InterPro" id="IPR038765">
    <property type="entry name" value="Papain-like_cys_pep_sf"/>
</dbReference>
<dbReference type="InterPro" id="IPR000855">
    <property type="entry name" value="Peptidase_C5"/>
</dbReference>
<dbReference type="Pfam" id="PF00770">
    <property type="entry name" value="Peptidase_C5"/>
    <property type="match status" value="1"/>
</dbReference>
<dbReference type="PIRSF" id="PIRSF001218">
    <property type="entry name" value="Protease_ADV"/>
    <property type="match status" value="1"/>
</dbReference>
<dbReference type="PRINTS" id="PR00703">
    <property type="entry name" value="ADVENDOPTASE"/>
</dbReference>
<dbReference type="SUPFAM" id="SSF54001">
    <property type="entry name" value="Cysteine proteinases"/>
    <property type="match status" value="1"/>
</dbReference>
<organismHost>
    <name type="scientific">Sus scrofa</name>
    <name type="common">Pig</name>
    <dbReference type="NCBI Taxonomy" id="9823"/>
</organismHost>
<proteinExistence type="inferred from homology"/>